<reference key="1">
    <citation type="journal article" date="2003" name="Mol. Microbiol.">
        <title>Genome-based analysis of virulence genes in a non-biofilm-forming Staphylococcus epidermidis strain (ATCC 12228).</title>
        <authorList>
            <person name="Zhang Y.-Q."/>
            <person name="Ren S.-X."/>
            <person name="Li H.-L."/>
            <person name="Wang Y.-X."/>
            <person name="Fu G."/>
            <person name="Yang J."/>
            <person name="Qin Z.-Q."/>
            <person name="Miao Y.-G."/>
            <person name="Wang W.-Y."/>
            <person name="Chen R.-S."/>
            <person name="Shen Y."/>
            <person name="Chen Z."/>
            <person name="Yuan Z.-H."/>
            <person name="Zhao G.-P."/>
            <person name="Qu D."/>
            <person name="Danchin A."/>
            <person name="Wen Y.-M."/>
        </authorList>
    </citation>
    <scope>NUCLEOTIDE SEQUENCE [LARGE SCALE GENOMIC DNA]</scope>
    <source>
        <strain>ATCC 12228 / FDA PCI 1200</strain>
    </source>
</reference>
<feature type="chain" id="PRO_0000163104" description="Molybdopterin synthase catalytic subunit">
    <location>
        <begin position="1"/>
        <end position="150"/>
    </location>
</feature>
<feature type="binding site" evidence="1">
    <location>
        <begin position="34"/>
        <end position="36"/>
    </location>
    <ligand>
        <name>substrate</name>
    </ligand>
</feature>
<feature type="binding site" evidence="1">
    <location>
        <position position="44"/>
    </location>
    <ligand>
        <name>substrate</name>
    </ligand>
</feature>
<feature type="binding site" evidence="1">
    <location>
        <begin position="100"/>
        <end position="101"/>
    </location>
    <ligand>
        <name>substrate</name>
    </ligand>
</feature>
<feature type="binding site" evidence="1">
    <location>
        <position position="116"/>
    </location>
    <ligand>
        <name>substrate</name>
    </ligand>
</feature>
<feature type="binding site" evidence="1">
    <location>
        <begin position="123"/>
        <end position="125"/>
    </location>
    <ligand>
        <name>substrate</name>
    </ligand>
</feature>
<gene>
    <name type="primary">moaE</name>
    <name type="ordered locus">SE_1844</name>
</gene>
<accession>Q8CNE3</accession>
<name>MOAE_STAES</name>
<sequence length="150" mass="17329">MKQFEIVTQPIETEQYRDFTINERQGAVVVFTGHVREWTKGIRTQHLEYEAYIPMAEKKLAQIGKEIEEKWPGTITTIVHRIGPLQISDIAVLIAVSSPHRKAAYAANEYAIERIKEIVPIWKKEIWEDGAEWQGHQKGTYNEAKKGKAR</sequence>
<comment type="function">
    <text evidence="1">Converts molybdopterin precursor Z into molybdopterin. This requires the incorporation of two sulfur atoms into precursor Z to generate a dithiolene group. The sulfur is provided by MoaD (By similarity).</text>
</comment>
<comment type="catalytic activity">
    <reaction>
        <text>2 [molybdopterin-synthase sulfur-carrier protein]-C-terminal-Gly-aminoethanethioate + cyclic pyranopterin phosphate + H2O = molybdopterin + 2 [molybdopterin-synthase sulfur-carrier protein]-C-terminal Gly-Gly + 2 H(+)</text>
        <dbReference type="Rhea" id="RHEA:26333"/>
        <dbReference type="Rhea" id="RHEA-COMP:12202"/>
        <dbReference type="Rhea" id="RHEA-COMP:19907"/>
        <dbReference type="ChEBI" id="CHEBI:15377"/>
        <dbReference type="ChEBI" id="CHEBI:15378"/>
        <dbReference type="ChEBI" id="CHEBI:58698"/>
        <dbReference type="ChEBI" id="CHEBI:59648"/>
        <dbReference type="ChEBI" id="CHEBI:90778"/>
        <dbReference type="ChEBI" id="CHEBI:232372"/>
        <dbReference type="EC" id="2.8.1.12"/>
    </reaction>
</comment>
<comment type="pathway">
    <text>Cofactor biosynthesis; molybdopterin biosynthesis.</text>
</comment>
<comment type="subunit">
    <text evidence="1">Heterotetramer of 2 MoaD subunits and 2 MoaE subunits. Also stable as homodimer. The enzyme changes between these two forms during catalysis (By similarity).</text>
</comment>
<comment type="similarity">
    <text evidence="2">Belongs to the MoaE family.</text>
</comment>
<proteinExistence type="inferred from homology"/>
<evidence type="ECO:0000250" key="1"/>
<evidence type="ECO:0000305" key="2"/>
<protein>
    <recommendedName>
        <fullName>Molybdopterin synthase catalytic subunit</fullName>
        <ecNumber>2.8.1.12</ecNumber>
    </recommendedName>
    <alternativeName>
        <fullName>MPT synthase subunit 2</fullName>
    </alternativeName>
    <alternativeName>
        <fullName>Molybdenum cofactor biosynthesis protein E</fullName>
    </alternativeName>
    <alternativeName>
        <fullName>Molybdopterin-converting factor large subunit</fullName>
    </alternativeName>
    <alternativeName>
        <fullName>Molybdopterin-converting factor subunit 2</fullName>
    </alternativeName>
</protein>
<keyword id="KW-0501">Molybdenum cofactor biosynthesis</keyword>
<keyword id="KW-0808">Transferase</keyword>
<dbReference type="EC" id="2.8.1.12"/>
<dbReference type="EMBL" id="AE015929">
    <property type="protein sequence ID" value="AAO05485.1"/>
    <property type="molecule type" value="Genomic_DNA"/>
</dbReference>
<dbReference type="RefSeq" id="NP_765399.1">
    <property type="nucleotide sequence ID" value="NC_004461.1"/>
</dbReference>
<dbReference type="RefSeq" id="WP_002438516.1">
    <property type="nucleotide sequence ID" value="NZ_WBME01000034.1"/>
</dbReference>
<dbReference type="SMR" id="Q8CNE3"/>
<dbReference type="KEGG" id="sep:SE_1844"/>
<dbReference type="PATRIC" id="fig|176280.10.peg.1802"/>
<dbReference type="eggNOG" id="COG0314">
    <property type="taxonomic scope" value="Bacteria"/>
</dbReference>
<dbReference type="HOGENOM" id="CLU_089568_1_2_9"/>
<dbReference type="OrthoDB" id="9803224at2"/>
<dbReference type="UniPathway" id="UPA00344"/>
<dbReference type="Proteomes" id="UP000001411">
    <property type="component" value="Chromosome"/>
</dbReference>
<dbReference type="GO" id="GO:0030366">
    <property type="term" value="F:molybdopterin synthase activity"/>
    <property type="evidence" value="ECO:0007669"/>
    <property type="project" value="UniProtKB-EC"/>
</dbReference>
<dbReference type="GO" id="GO:0006777">
    <property type="term" value="P:Mo-molybdopterin cofactor biosynthetic process"/>
    <property type="evidence" value="ECO:0007669"/>
    <property type="project" value="UniProtKB-KW"/>
</dbReference>
<dbReference type="CDD" id="cd00756">
    <property type="entry name" value="MoaE"/>
    <property type="match status" value="1"/>
</dbReference>
<dbReference type="FunFam" id="3.90.1170.40:FF:000003">
    <property type="entry name" value="Molybdopterin converting factor subunit 2"/>
    <property type="match status" value="1"/>
</dbReference>
<dbReference type="Gene3D" id="3.90.1170.40">
    <property type="entry name" value="Molybdopterin biosynthesis MoaE subunit"/>
    <property type="match status" value="1"/>
</dbReference>
<dbReference type="InterPro" id="IPR036563">
    <property type="entry name" value="MoaE_sf"/>
</dbReference>
<dbReference type="InterPro" id="IPR003448">
    <property type="entry name" value="Mopterin_biosynth_MoaE"/>
</dbReference>
<dbReference type="PANTHER" id="PTHR23404">
    <property type="entry name" value="MOLYBDOPTERIN SYNTHASE RELATED"/>
    <property type="match status" value="1"/>
</dbReference>
<dbReference type="Pfam" id="PF02391">
    <property type="entry name" value="MoaE"/>
    <property type="match status" value="1"/>
</dbReference>
<dbReference type="SUPFAM" id="SSF54690">
    <property type="entry name" value="Molybdopterin synthase subunit MoaE"/>
    <property type="match status" value="1"/>
</dbReference>
<organism>
    <name type="scientific">Staphylococcus epidermidis (strain ATCC 12228 / FDA PCI 1200)</name>
    <dbReference type="NCBI Taxonomy" id="176280"/>
    <lineage>
        <taxon>Bacteria</taxon>
        <taxon>Bacillati</taxon>
        <taxon>Bacillota</taxon>
        <taxon>Bacilli</taxon>
        <taxon>Bacillales</taxon>
        <taxon>Staphylococcaceae</taxon>
        <taxon>Staphylococcus</taxon>
    </lineage>
</organism>